<proteinExistence type="inferred from homology"/>
<evidence type="ECO:0000255" key="1">
    <source>
        <dbReference type="HAMAP-Rule" id="MF_00494"/>
    </source>
</evidence>
<name>TAL_GEOMG</name>
<comment type="function">
    <text evidence="1">Transaldolase is important for the balance of metabolites in the pentose-phosphate pathway.</text>
</comment>
<comment type="catalytic activity">
    <reaction evidence="1">
        <text>D-sedoheptulose 7-phosphate + D-glyceraldehyde 3-phosphate = D-erythrose 4-phosphate + beta-D-fructose 6-phosphate</text>
        <dbReference type="Rhea" id="RHEA:17053"/>
        <dbReference type="ChEBI" id="CHEBI:16897"/>
        <dbReference type="ChEBI" id="CHEBI:57483"/>
        <dbReference type="ChEBI" id="CHEBI:57634"/>
        <dbReference type="ChEBI" id="CHEBI:59776"/>
        <dbReference type="EC" id="2.2.1.2"/>
    </reaction>
</comment>
<comment type="pathway">
    <text evidence="1">Carbohydrate degradation; pentose phosphate pathway; D-glyceraldehyde 3-phosphate and beta-D-fructose 6-phosphate from D-ribose 5-phosphate and D-xylulose 5-phosphate (non-oxidative stage): step 2/3.</text>
</comment>
<comment type="subcellular location">
    <subcellularLocation>
        <location evidence="1">Cytoplasm</location>
    </subcellularLocation>
</comment>
<comment type="similarity">
    <text evidence="1">Belongs to the transaldolase family. Type 3B subfamily.</text>
</comment>
<protein>
    <recommendedName>
        <fullName evidence="1">Probable transaldolase</fullName>
        <ecNumber evidence="1">2.2.1.2</ecNumber>
    </recommendedName>
</protein>
<keyword id="KW-0963">Cytoplasm</keyword>
<keyword id="KW-0570">Pentose shunt</keyword>
<keyword id="KW-1185">Reference proteome</keyword>
<keyword id="KW-0704">Schiff base</keyword>
<keyword id="KW-0808">Transferase</keyword>
<dbReference type="EC" id="2.2.1.2" evidence="1"/>
<dbReference type="EMBL" id="CP000148">
    <property type="protein sequence ID" value="ABB30740.1"/>
    <property type="molecule type" value="Genomic_DNA"/>
</dbReference>
<dbReference type="SMR" id="Q39YD4"/>
<dbReference type="STRING" id="269799.Gmet_0497"/>
<dbReference type="KEGG" id="gme:Gmet_0497"/>
<dbReference type="eggNOG" id="COG0176">
    <property type="taxonomic scope" value="Bacteria"/>
</dbReference>
<dbReference type="HOGENOM" id="CLU_079764_0_0_7"/>
<dbReference type="UniPathway" id="UPA00115">
    <property type="reaction ID" value="UER00414"/>
</dbReference>
<dbReference type="Proteomes" id="UP000007073">
    <property type="component" value="Chromosome"/>
</dbReference>
<dbReference type="GO" id="GO:0005737">
    <property type="term" value="C:cytoplasm"/>
    <property type="evidence" value="ECO:0007669"/>
    <property type="project" value="UniProtKB-SubCell"/>
</dbReference>
<dbReference type="GO" id="GO:0016832">
    <property type="term" value="F:aldehyde-lyase activity"/>
    <property type="evidence" value="ECO:0007669"/>
    <property type="project" value="InterPro"/>
</dbReference>
<dbReference type="GO" id="GO:0004801">
    <property type="term" value="F:transaldolase activity"/>
    <property type="evidence" value="ECO:0007669"/>
    <property type="project" value="UniProtKB-UniRule"/>
</dbReference>
<dbReference type="GO" id="GO:0005975">
    <property type="term" value="P:carbohydrate metabolic process"/>
    <property type="evidence" value="ECO:0007669"/>
    <property type="project" value="InterPro"/>
</dbReference>
<dbReference type="GO" id="GO:0006098">
    <property type="term" value="P:pentose-phosphate shunt"/>
    <property type="evidence" value="ECO:0007669"/>
    <property type="project" value="UniProtKB-UniRule"/>
</dbReference>
<dbReference type="CDD" id="cd00956">
    <property type="entry name" value="Transaldolase_FSA"/>
    <property type="match status" value="1"/>
</dbReference>
<dbReference type="FunFam" id="3.20.20.70:FF:000018">
    <property type="entry name" value="Probable transaldolase"/>
    <property type="match status" value="1"/>
</dbReference>
<dbReference type="Gene3D" id="3.20.20.70">
    <property type="entry name" value="Aldolase class I"/>
    <property type="match status" value="1"/>
</dbReference>
<dbReference type="HAMAP" id="MF_00494">
    <property type="entry name" value="Transaldolase_3b"/>
    <property type="match status" value="1"/>
</dbReference>
<dbReference type="InterPro" id="IPR013785">
    <property type="entry name" value="Aldolase_TIM"/>
</dbReference>
<dbReference type="InterPro" id="IPR001585">
    <property type="entry name" value="TAL/FSA"/>
</dbReference>
<dbReference type="InterPro" id="IPR022999">
    <property type="entry name" value="Transaldolase_3B"/>
</dbReference>
<dbReference type="InterPro" id="IPR004731">
    <property type="entry name" value="Transaldolase_3B/F6P_aldolase"/>
</dbReference>
<dbReference type="InterPro" id="IPR018225">
    <property type="entry name" value="Transaldolase_AS"/>
</dbReference>
<dbReference type="InterPro" id="IPR033919">
    <property type="entry name" value="TSA/FSA_arc/bac"/>
</dbReference>
<dbReference type="NCBIfam" id="TIGR00875">
    <property type="entry name" value="fsa_talC_mipB"/>
    <property type="match status" value="1"/>
</dbReference>
<dbReference type="PANTHER" id="PTHR10683:SF40">
    <property type="entry name" value="FRUCTOSE-6-PHOSPHATE ALDOLASE 1-RELATED"/>
    <property type="match status" value="1"/>
</dbReference>
<dbReference type="PANTHER" id="PTHR10683">
    <property type="entry name" value="TRANSALDOLASE"/>
    <property type="match status" value="1"/>
</dbReference>
<dbReference type="Pfam" id="PF00923">
    <property type="entry name" value="TAL_FSA"/>
    <property type="match status" value="1"/>
</dbReference>
<dbReference type="SUPFAM" id="SSF51569">
    <property type="entry name" value="Aldolase"/>
    <property type="match status" value="1"/>
</dbReference>
<dbReference type="PROSITE" id="PS01054">
    <property type="entry name" value="TRANSALDOLASE_1"/>
    <property type="match status" value="1"/>
</dbReference>
<dbReference type="PROSITE" id="PS00958">
    <property type="entry name" value="TRANSALDOLASE_2"/>
    <property type="match status" value="1"/>
</dbReference>
<organism>
    <name type="scientific">Geobacter metallireducens (strain ATCC 53774 / DSM 7210 / GS-15)</name>
    <dbReference type="NCBI Taxonomy" id="269799"/>
    <lineage>
        <taxon>Bacteria</taxon>
        <taxon>Pseudomonadati</taxon>
        <taxon>Thermodesulfobacteriota</taxon>
        <taxon>Desulfuromonadia</taxon>
        <taxon>Geobacterales</taxon>
        <taxon>Geobacteraceae</taxon>
        <taxon>Geobacter</taxon>
    </lineage>
</organism>
<reference key="1">
    <citation type="journal article" date="2009" name="BMC Microbiol.">
        <title>The genome sequence of Geobacter metallireducens: features of metabolism, physiology and regulation common and dissimilar to Geobacter sulfurreducens.</title>
        <authorList>
            <person name="Aklujkar M."/>
            <person name="Krushkal J."/>
            <person name="DiBartolo G."/>
            <person name="Lapidus A."/>
            <person name="Land M.L."/>
            <person name="Lovley D.R."/>
        </authorList>
    </citation>
    <scope>NUCLEOTIDE SEQUENCE [LARGE SCALE GENOMIC DNA]</scope>
    <source>
        <strain>ATCC 53774 / DSM 7210 / GS-15</strain>
    </source>
</reference>
<sequence>MKFFIDTADVNEIREAHELGLVDGVTTNPSLIAKSGRKFEEVIKEITGIVDGPISAEVVSLDHDGMIREAEELAAIHKNIVIKLPMTPEGLKACTTLTKKGIKTNVTLIFTAMQALLAAKAGATYVSPFVGRLDDISQDGMGIIDDIKTIFDNYGYTAEIIVASVRNPIHVLNAALIGADIATIPYSVMLQLAKHPLTDAGIERFLKDWEKVPK</sequence>
<feature type="chain" id="PRO_1000060464" description="Probable transaldolase">
    <location>
        <begin position="1"/>
        <end position="214"/>
    </location>
</feature>
<feature type="active site" description="Schiff-base intermediate with substrate" evidence="1">
    <location>
        <position position="83"/>
    </location>
</feature>
<accession>Q39YD4</accession>
<gene>
    <name evidence="1" type="primary">tal</name>
    <name type="ordered locus">Gmet_0497</name>
</gene>